<accession>Q46LM0</accession>
<name>AROB_PROMT</name>
<feature type="chain" id="PRO_0000231111" description="3-dehydroquinate synthase">
    <location>
        <begin position="1"/>
        <end position="368"/>
    </location>
</feature>
<feature type="binding site" evidence="1">
    <location>
        <begin position="112"/>
        <end position="116"/>
    </location>
    <ligand>
        <name>NAD(+)</name>
        <dbReference type="ChEBI" id="CHEBI:57540"/>
    </ligand>
</feature>
<feature type="binding site" evidence="1">
    <location>
        <begin position="136"/>
        <end position="137"/>
    </location>
    <ligand>
        <name>NAD(+)</name>
        <dbReference type="ChEBI" id="CHEBI:57540"/>
    </ligand>
</feature>
<feature type="binding site" evidence="1">
    <location>
        <position position="149"/>
    </location>
    <ligand>
        <name>NAD(+)</name>
        <dbReference type="ChEBI" id="CHEBI:57540"/>
    </ligand>
</feature>
<feature type="binding site" evidence="1">
    <location>
        <position position="158"/>
    </location>
    <ligand>
        <name>NAD(+)</name>
        <dbReference type="ChEBI" id="CHEBI:57540"/>
    </ligand>
</feature>
<feature type="binding site" evidence="1">
    <location>
        <begin position="176"/>
        <end position="179"/>
    </location>
    <ligand>
        <name>NAD(+)</name>
        <dbReference type="ChEBI" id="CHEBI:57540"/>
    </ligand>
</feature>
<feature type="binding site" evidence="1">
    <location>
        <position position="191"/>
    </location>
    <ligand>
        <name>Zn(2+)</name>
        <dbReference type="ChEBI" id="CHEBI:29105"/>
    </ligand>
</feature>
<feature type="binding site" evidence="1">
    <location>
        <position position="256"/>
    </location>
    <ligand>
        <name>Zn(2+)</name>
        <dbReference type="ChEBI" id="CHEBI:29105"/>
    </ligand>
</feature>
<feature type="binding site" evidence="1">
    <location>
        <position position="273"/>
    </location>
    <ligand>
        <name>Zn(2+)</name>
        <dbReference type="ChEBI" id="CHEBI:29105"/>
    </ligand>
</feature>
<keyword id="KW-0028">Amino-acid biosynthesis</keyword>
<keyword id="KW-0057">Aromatic amino acid biosynthesis</keyword>
<keyword id="KW-0170">Cobalt</keyword>
<keyword id="KW-0963">Cytoplasm</keyword>
<keyword id="KW-0456">Lyase</keyword>
<keyword id="KW-0479">Metal-binding</keyword>
<keyword id="KW-0520">NAD</keyword>
<keyword id="KW-0547">Nucleotide-binding</keyword>
<keyword id="KW-1185">Reference proteome</keyword>
<keyword id="KW-0862">Zinc</keyword>
<protein>
    <recommendedName>
        <fullName evidence="1">3-dehydroquinate synthase</fullName>
        <shortName evidence="1">DHQS</shortName>
        <ecNumber evidence="1">4.2.3.4</ecNumber>
    </recommendedName>
</protein>
<gene>
    <name evidence="1" type="primary">aroB</name>
    <name type="ordered locus">PMN2A_0116</name>
</gene>
<dbReference type="EC" id="4.2.3.4" evidence="1"/>
<dbReference type="EMBL" id="CP000095">
    <property type="protein sequence ID" value="AAZ57608.1"/>
    <property type="molecule type" value="Genomic_DNA"/>
</dbReference>
<dbReference type="RefSeq" id="WP_011293650.1">
    <property type="nucleotide sequence ID" value="NC_007335.2"/>
</dbReference>
<dbReference type="SMR" id="Q46LM0"/>
<dbReference type="STRING" id="59920.PMN2A_0116"/>
<dbReference type="KEGG" id="pmn:PMN2A_0116"/>
<dbReference type="HOGENOM" id="CLU_001201_0_2_3"/>
<dbReference type="OrthoDB" id="9806583at2"/>
<dbReference type="PhylomeDB" id="Q46LM0"/>
<dbReference type="UniPathway" id="UPA00053">
    <property type="reaction ID" value="UER00085"/>
</dbReference>
<dbReference type="Proteomes" id="UP000002535">
    <property type="component" value="Chromosome"/>
</dbReference>
<dbReference type="GO" id="GO:0005737">
    <property type="term" value="C:cytoplasm"/>
    <property type="evidence" value="ECO:0007669"/>
    <property type="project" value="UniProtKB-SubCell"/>
</dbReference>
<dbReference type="GO" id="GO:0003856">
    <property type="term" value="F:3-dehydroquinate synthase activity"/>
    <property type="evidence" value="ECO:0007669"/>
    <property type="project" value="UniProtKB-UniRule"/>
</dbReference>
<dbReference type="GO" id="GO:0046872">
    <property type="term" value="F:metal ion binding"/>
    <property type="evidence" value="ECO:0007669"/>
    <property type="project" value="UniProtKB-KW"/>
</dbReference>
<dbReference type="GO" id="GO:0000166">
    <property type="term" value="F:nucleotide binding"/>
    <property type="evidence" value="ECO:0007669"/>
    <property type="project" value="UniProtKB-KW"/>
</dbReference>
<dbReference type="GO" id="GO:0008652">
    <property type="term" value="P:amino acid biosynthetic process"/>
    <property type="evidence" value="ECO:0007669"/>
    <property type="project" value="UniProtKB-KW"/>
</dbReference>
<dbReference type="GO" id="GO:0009073">
    <property type="term" value="P:aromatic amino acid family biosynthetic process"/>
    <property type="evidence" value="ECO:0007669"/>
    <property type="project" value="UniProtKB-KW"/>
</dbReference>
<dbReference type="GO" id="GO:0009423">
    <property type="term" value="P:chorismate biosynthetic process"/>
    <property type="evidence" value="ECO:0007669"/>
    <property type="project" value="UniProtKB-UniRule"/>
</dbReference>
<dbReference type="CDD" id="cd08195">
    <property type="entry name" value="DHQS"/>
    <property type="match status" value="1"/>
</dbReference>
<dbReference type="FunFam" id="3.40.50.1970:FF:000007">
    <property type="entry name" value="Pentafunctional AROM polypeptide"/>
    <property type="match status" value="1"/>
</dbReference>
<dbReference type="Gene3D" id="3.40.50.1970">
    <property type="match status" value="1"/>
</dbReference>
<dbReference type="Gene3D" id="1.20.1090.10">
    <property type="entry name" value="Dehydroquinate synthase-like - alpha domain"/>
    <property type="match status" value="1"/>
</dbReference>
<dbReference type="HAMAP" id="MF_00110">
    <property type="entry name" value="DHQ_synthase"/>
    <property type="match status" value="1"/>
</dbReference>
<dbReference type="InterPro" id="IPR050071">
    <property type="entry name" value="Dehydroquinate_synthase"/>
</dbReference>
<dbReference type="InterPro" id="IPR016037">
    <property type="entry name" value="DHQ_synth_AroB"/>
</dbReference>
<dbReference type="InterPro" id="IPR030963">
    <property type="entry name" value="DHQ_synth_fam"/>
</dbReference>
<dbReference type="InterPro" id="IPR030960">
    <property type="entry name" value="DHQS/DOIS_N"/>
</dbReference>
<dbReference type="InterPro" id="IPR056179">
    <property type="entry name" value="DHQS_C"/>
</dbReference>
<dbReference type="NCBIfam" id="TIGR01357">
    <property type="entry name" value="aroB"/>
    <property type="match status" value="1"/>
</dbReference>
<dbReference type="PANTHER" id="PTHR43622">
    <property type="entry name" value="3-DEHYDROQUINATE SYNTHASE"/>
    <property type="match status" value="1"/>
</dbReference>
<dbReference type="PANTHER" id="PTHR43622:SF7">
    <property type="entry name" value="3-DEHYDROQUINATE SYNTHASE, CHLOROPLASTIC"/>
    <property type="match status" value="1"/>
</dbReference>
<dbReference type="Pfam" id="PF01761">
    <property type="entry name" value="DHQ_synthase"/>
    <property type="match status" value="1"/>
</dbReference>
<dbReference type="Pfam" id="PF24621">
    <property type="entry name" value="DHQS_C"/>
    <property type="match status" value="1"/>
</dbReference>
<dbReference type="PIRSF" id="PIRSF001455">
    <property type="entry name" value="DHQ_synth"/>
    <property type="match status" value="1"/>
</dbReference>
<dbReference type="SUPFAM" id="SSF56796">
    <property type="entry name" value="Dehydroquinate synthase-like"/>
    <property type="match status" value="1"/>
</dbReference>
<sequence length="368" mass="40646">MNKDNHHIKVSLTNNPYEIVIGKSSLESIGDELFNIGFREGLKVLVVSNKEVSDHYGDCIIKSLIKSKFKPKLLIIKAGEDQKNQSSIDLIHNAAYEARLERGSLMIALGGGVIGDMTGFAAATWLRGVNVVQIPTTLLAMVDASIGGKTGINHSKGKNLIGAFHQPRLVLIDPKTLITLPSREFKAGMAEIIKYGVISDLELFELLERQENISDLSNIKEKLLIEIIKRSAKSKAEIVIKDEKESGVRAFLNYGHTFGHVIENLCGYGKWLHGEAVAMGMVAVGQLAVQRGLWKEDNAKRQKRLIEKAGLPSNWPQLEIESVLSSLQGDKKVKNGKVSFVMPLKIGDVKLFNNISNKEIRECLQKIS</sequence>
<proteinExistence type="inferred from homology"/>
<reference key="1">
    <citation type="journal article" date="2007" name="PLoS Genet.">
        <title>Patterns and implications of gene gain and loss in the evolution of Prochlorococcus.</title>
        <authorList>
            <person name="Kettler G.C."/>
            <person name="Martiny A.C."/>
            <person name="Huang K."/>
            <person name="Zucker J."/>
            <person name="Coleman M.L."/>
            <person name="Rodrigue S."/>
            <person name="Chen F."/>
            <person name="Lapidus A."/>
            <person name="Ferriera S."/>
            <person name="Johnson J."/>
            <person name="Steglich C."/>
            <person name="Church G.M."/>
            <person name="Richardson P."/>
            <person name="Chisholm S.W."/>
        </authorList>
    </citation>
    <scope>NUCLEOTIDE SEQUENCE [LARGE SCALE GENOMIC DNA]</scope>
    <source>
        <strain>NATL2A</strain>
    </source>
</reference>
<organism>
    <name type="scientific">Prochlorococcus marinus (strain NATL2A)</name>
    <dbReference type="NCBI Taxonomy" id="59920"/>
    <lineage>
        <taxon>Bacteria</taxon>
        <taxon>Bacillati</taxon>
        <taxon>Cyanobacteriota</taxon>
        <taxon>Cyanophyceae</taxon>
        <taxon>Synechococcales</taxon>
        <taxon>Prochlorococcaceae</taxon>
        <taxon>Prochlorococcus</taxon>
    </lineage>
</organism>
<comment type="function">
    <text evidence="1">Catalyzes the conversion of 3-deoxy-D-arabino-heptulosonate 7-phosphate (DAHP) to dehydroquinate (DHQ).</text>
</comment>
<comment type="catalytic activity">
    <reaction evidence="1">
        <text>7-phospho-2-dehydro-3-deoxy-D-arabino-heptonate = 3-dehydroquinate + phosphate</text>
        <dbReference type="Rhea" id="RHEA:21968"/>
        <dbReference type="ChEBI" id="CHEBI:32364"/>
        <dbReference type="ChEBI" id="CHEBI:43474"/>
        <dbReference type="ChEBI" id="CHEBI:58394"/>
        <dbReference type="EC" id="4.2.3.4"/>
    </reaction>
</comment>
<comment type="cofactor">
    <cofactor evidence="1">
        <name>Co(2+)</name>
        <dbReference type="ChEBI" id="CHEBI:48828"/>
    </cofactor>
    <cofactor evidence="1">
        <name>Zn(2+)</name>
        <dbReference type="ChEBI" id="CHEBI:29105"/>
    </cofactor>
    <text evidence="1">Binds 1 divalent metal cation per subunit. Can use either Co(2+) or Zn(2+).</text>
</comment>
<comment type="cofactor">
    <cofactor evidence="1">
        <name>NAD(+)</name>
        <dbReference type="ChEBI" id="CHEBI:57540"/>
    </cofactor>
</comment>
<comment type="pathway">
    <text evidence="1">Metabolic intermediate biosynthesis; chorismate biosynthesis; chorismate from D-erythrose 4-phosphate and phosphoenolpyruvate: step 2/7.</text>
</comment>
<comment type="subcellular location">
    <subcellularLocation>
        <location evidence="1">Cytoplasm</location>
    </subcellularLocation>
</comment>
<comment type="similarity">
    <text evidence="1">Belongs to the sugar phosphate cyclases superfamily. Dehydroquinate synthase family.</text>
</comment>
<evidence type="ECO:0000255" key="1">
    <source>
        <dbReference type="HAMAP-Rule" id="MF_00110"/>
    </source>
</evidence>